<dbReference type="EC" id="2.8.4.3" evidence="1"/>
<dbReference type="EMBL" id="FM200053">
    <property type="protein sequence ID" value="CAR60123.1"/>
    <property type="status" value="ALT_INIT"/>
    <property type="molecule type" value="Genomic_DNA"/>
</dbReference>
<dbReference type="RefSeq" id="WP_016505467.1">
    <property type="nucleotide sequence ID" value="NC_011147.1"/>
</dbReference>
<dbReference type="SMR" id="B5BCD1"/>
<dbReference type="KEGG" id="sek:SSPA1923"/>
<dbReference type="HOGENOM" id="CLU_018697_2_0_6"/>
<dbReference type="Proteomes" id="UP000001869">
    <property type="component" value="Chromosome"/>
</dbReference>
<dbReference type="GO" id="GO:0005829">
    <property type="term" value="C:cytosol"/>
    <property type="evidence" value="ECO:0007669"/>
    <property type="project" value="TreeGrafter"/>
</dbReference>
<dbReference type="GO" id="GO:0051539">
    <property type="term" value="F:4 iron, 4 sulfur cluster binding"/>
    <property type="evidence" value="ECO:0007669"/>
    <property type="project" value="UniProtKB-UniRule"/>
</dbReference>
<dbReference type="GO" id="GO:0046872">
    <property type="term" value="F:metal ion binding"/>
    <property type="evidence" value="ECO:0007669"/>
    <property type="project" value="UniProtKB-KW"/>
</dbReference>
<dbReference type="GO" id="GO:0035597">
    <property type="term" value="F:N6-isopentenyladenosine methylthiotransferase activity"/>
    <property type="evidence" value="ECO:0007669"/>
    <property type="project" value="TreeGrafter"/>
</dbReference>
<dbReference type="CDD" id="cd01335">
    <property type="entry name" value="Radical_SAM"/>
    <property type="match status" value="1"/>
</dbReference>
<dbReference type="FunFam" id="3.40.50.12160:FF:000001">
    <property type="entry name" value="tRNA-2-methylthio-N(6)-dimethylallyladenosine synthase"/>
    <property type="match status" value="1"/>
</dbReference>
<dbReference type="FunFam" id="3.80.30.20:FF:000001">
    <property type="entry name" value="tRNA-2-methylthio-N(6)-dimethylallyladenosine synthase 2"/>
    <property type="match status" value="1"/>
</dbReference>
<dbReference type="Gene3D" id="3.40.50.12160">
    <property type="entry name" value="Methylthiotransferase, N-terminal domain"/>
    <property type="match status" value="1"/>
</dbReference>
<dbReference type="Gene3D" id="3.80.30.20">
    <property type="entry name" value="tm_1862 like domain"/>
    <property type="match status" value="1"/>
</dbReference>
<dbReference type="HAMAP" id="MF_01864">
    <property type="entry name" value="tRNA_metthiotr_MiaB"/>
    <property type="match status" value="1"/>
</dbReference>
<dbReference type="InterPro" id="IPR006638">
    <property type="entry name" value="Elp3/MiaA/NifB-like_rSAM"/>
</dbReference>
<dbReference type="InterPro" id="IPR005839">
    <property type="entry name" value="Methylthiotransferase"/>
</dbReference>
<dbReference type="InterPro" id="IPR020612">
    <property type="entry name" value="Methylthiotransferase_CS"/>
</dbReference>
<dbReference type="InterPro" id="IPR013848">
    <property type="entry name" value="Methylthiotransferase_N"/>
</dbReference>
<dbReference type="InterPro" id="IPR038135">
    <property type="entry name" value="Methylthiotransferase_N_sf"/>
</dbReference>
<dbReference type="InterPro" id="IPR006463">
    <property type="entry name" value="MiaB_methiolase"/>
</dbReference>
<dbReference type="InterPro" id="IPR007197">
    <property type="entry name" value="rSAM"/>
</dbReference>
<dbReference type="InterPro" id="IPR023404">
    <property type="entry name" value="rSAM_horseshoe"/>
</dbReference>
<dbReference type="InterPro" id="IPR002792">
    <property type="entry name" value="TRAM_dom"/>
</dbReference>
<dbReference type="NCBIfam" id="TIGR01574">
    <property type="entry name" value="miaB-methiolase"/>
    <property type="match status" value="1"/>
</dbReference>
<dbReference type="NCBIfam" id="TIGR00089">
    <property type="entry name" value="MiaB/RimO family radical SAM methylthiotransferase"/>
    <property type="match status" value="1"/>
</dbReference>
<dbReference type="PANTHER" id="PTHR43020">
    <property type="entry name" value="CDK5 REGULATORY SUBUNIT-ASSOCIATED PROTEIN 1"/>
    <property type="match status" value="1"/>
</dbReference>
<dbReference type="PANTHER" id="PTHR43020:SF2">
    <property type="entry name" value="MITOCHONDRIAL TRNA METHYLTHIOTRANSFERASE CDK5RAP1"/>
    <property type="match status" value="1"/>
</dbReference>
<dbReference type="Pfam" id="PF04055">
    <property type="entry name" value="Radical_SAM"/>
    <property type="match status" value="1"/>
</dbReference>
<dbReference type="Pfam" id="PF01938">
    <property type="entry name" value="TRAM"/>
    <property type="match status" value="1"/>
</dbReference>
<dbReference type="Pfam" id="PF00919">
    <property type="entry name" value="UPF0004"/>
    <property type="match status" value="1"/>
</dbReference>
<dbReference type="SFLD" id="SFLDF00273">
    <property type="entry name" value="(dimethylallyl)adenosine_tRNA"/>
    <property type="match status" value="1"/>
</dbReference>
<dbReference type="SFLD" id="SFLDG01082">
    <property type="entry name" value="B12-binding_domain_containing"/>
    <property type="match status" value="1"/>
</dbReference>
<dbReference type="SFLD" id="SFLDS00029">
    <property type="entry name" value="Radical_SAM"/>
    <property type="match status" value="1"/>
</dbReference>
<dbReference type="SMART" id="SM00729">
    <property type="entry name" value="Elp3"/>
    <property type="match status" value="1"/>
</dbReference>
<dbReference type="SUPFAM" id="SSF102114">
    <property type="entry name" value="Radical SAM enzymes"/>
    <property type="match status" value="1"/>
</dbReference>
<dbReference type="PROSITE" id="PS51449">
    <property type="entry name" value="MTTASE_N"/>
    <property type="match status" value="1"/>
</dbReference>
<dbReference type="PROSITE" id="PS01278">
    <property type="entry name" value="MTTASE_RADICAL"/>
    <property type="match status" value="1"/>
</dbReference>
<dbReference type="PROSITE" id="PS51918">
    <property type="entry name" value="RADICAL_SAM"/>
    <property type="match status" value="1"/>
</dbReference>
<dbReference type="PROSITE" id="PS50926">
    <property type="entry name" value="TRAM"/>
    <property type="match status" value="1"/>
</dbReference>
<name>MIAB_SALPK</name>
<gene>
    <name evidence="1" type="primary">miaB</name>
    <name type="ordered locus">SSPA1923</name>
</gene>
<accession>B5BCD1</accession>
<protein>
    <recommendedName>
        <fullName evidence="1">tRNA-2-methylthio-N(6)-dimethylallyladenosine synthase</fullName>
        <ecNumber evidence="1">2.8.4.3</ecNumber>
    </recommendedName>
    <alternativeName>
        <fullName evidence="1">(Dimethylallyl)adenosine tRNA methylthiotransferase MiaB</fullName>
    </alternativeName>
    <alternativeName>
        <fullName evidence="1">tRNA-i(6)A37 methylthiotransferase</fullName>
    </alternativeName>
</protein>
<proteinExistence type="inferred from homology"/>
<feature type="chain" id="PRO_0000374528" description="tRNA-2-methylthio-N(6)-dimethylallyladenosine synthase">
    <location>
        <begin position="1"/>
        <end position="474"/>
    </location>
</feature>
<feature type="domain" description="MTTase N-terminal" evidence="1">
    <location>
        <begin position="3"/>
        <end position="120"/>
    </location>
</feature>
<feature type="domain" description="Radical SAM core" evidence="2">
    <location>
        <begin position="143"/>
        <end position="375"/>
    </location>
</feature>
<feature type="domain" description="TRAM" evidence="1">
    <location>
        <begin position="378"/>
        <end position="441"/>
    </location>
</feature>
<feature type="binding site" evidence="1">
    <location>
        <position position="12"/>
    </location>
    <ligand>
        <name>[4Fe-4S] cluster</name>
        <dbReference type="ChEBI" id="CHEBI:49883"/>
        <label>1</label>
    </ligand>
</feature>
<feature type="binding site" evidence="1">
    <location>
        <position position="49"/>
    </location>
    <ligand>
        <name>[4Fe-4S] cluster</name>
        <dbReference type="ChEBI" id="CHEBI:49883"/>
        <label>1</label>
    </ligand>
</feature>
<feature type="binding site" evidence="1">
    <location>
        <position position="83"/>
    </location>
    <ligand>
        <name>[4Fe-4S] cluster</name>
        <dbReference type="ChEBI" id="CHEBI:49883"/>
        <label>1</label>
    </ligand>
</feature>
<feature type="binding site" evidence="1">
    <location>
        <position position="157"/>
    </location>
    <ligand>
        <name>[4Fe-4S] cluster</name>
        <dbReference type="ChEBI" id="CHEBI:49883"/>
        <label>2</label>
        <note>4Fe-4S-S-AdoMet</note>
    </ligand>
</feature>
<feature type="binding site" evidence="1">
    <location>
        <position position="161"/>
    </location>
    <ligand>
        <name>[4Fe-4S] cluster</name>
        <dbReference type="ChEBI" id="CHEBI:49883"/>
        <label>2</label>
        <note>4Fe-4S-S-AdoMet</note>
    </ligand>
</feature>
<feature type="binding site" evidence="1">
    <location>
        <position position="164"/>
    </location>
    <ligand>
        <name>[4Fe-4S] cluster</name>
        <dbReference type="ChEBI" id="CHEBI:49883"/>
        <label>2</label>
        <note>4Fe-4S-S-AdoMet</note>
    </ligand>
</feature>
<sequence>MTKKLHIKTWGCQMNEYDSSKMADLLDATHGYQLTDVAEEADVLLLNTCSIREKAQEKVFHQLGRWRLLKEKNPDLIIGVGGCVASQEGEHIRQRAHYVDIIFGPQTSHRLPEMINSVRGDRSPVVDISFPEIEKFDRLPEPRAEGPTAFVSIMEGCNKYCTYCVVPYTRGEEVSRPSDDILFEIAQLAAQGVREVNLLGQNVNAWRGENYDGTTGTFADLLRLVAAIDGIDRIRFTTSHPIEFTDDIIEVYRDTPELVSFLHLPVQSGSDRVLNLMGRTHTALEYKAIIRKLRAARPDIQISSDFIVGFPGETTDDFEKTMKLIADVNFDMSYSFIFSARPGTPAADMVDDVPEEEKKQRLYILQERINQQAMAWSRRMLGTTQRILVEGTSRKNIMELSGRTENNRVVNFEGTPEMIGKFVDVEITDVYPNSLRGKVVRTEDEMGLRVAETPESVIARTRKENELGVGFYQP</sequence>
<keyword id="KW-0004">4Fe-4S</keyword>
<keyword id="KW-0963">Cytoplasm</keyword>
<keyword id="KW-0408">Iron</keyword>
<keyword id="KW-0411">Iron-sulfur</keyword>
<keyword id="KW-0479">Metal-binding</keyword>
<keyword id="KW-0949">S-adenosyl-L-methionine</keyword>
<keyword id="KW-0808">Transferase</keyword>
<keyword id="KW-0819">tRNA processing</keyword>
<comment type="function">
    <text evidence="1">Catalyzes the methylthiolation of N6-(dimethylallyl)adenosine (i(6)A), leading to the formation of 2-methylthio-N6-(dimethylallyl)adenosine (ms(2)i(6)A) at position 37 in tRNAs that read codons beginning with uridine.</text>
</comment>
<comment type="catalytic activity">
    <reaction evidence="1">
        <text>N(6)-dimethylallyladenosine(37) in tRNA + (sulfur carrier)-SH + AH2 + 2 S-adenosyl-L-methionine = 2-methylsulfanyl-N(6)-dimethylallyladenosine(37) in tRNA + (sulfur carrier)-H + 5'-deoxyadenosine + L-methionine + A + S-adenosyl-L-homocysteine + 2 H(+)</text>
        <dbReference type="Rhea" id="RHEA:37067"/>
        <dbReference type="Rhea" id="RHEA-COMP:10375"/>
        <dbReference type="Rhea" id="RHEA-COMP:10376"/>
        <dbReference type="Rhea" id="RHEA-COMP:14737"/>
        <dbReference type="Rhea" id="RHEA-COMP:14739"/>
        <dbReference type="ChEBI" id="CHEBI:13193"/>
        <dbReference type="ChEBI" id="CHEBI:15378"/>
        <dbReference type="ChEBI" id="CHEBI:17319"/>
        <dbReference type="ChEBI" id="CHEBI:17499"/>
        <dbReference type="ChEBI" id="CHEBI:29917"/>
        <dbReference type="ChEBI" id="CHEBI:57844"/>
        <dbReference type="ChEBI" id="CHEBI:57856"/>
        <dbReference type="ChEBI" id="CHEBI:59789"/>
        <dbReference type="ChEBI" id="CHEBI:64428"/>
        <dbReference type="ChEBI" id="CHEBI:74415"/>
        <dbReference type="ChEBI" id="CHEBI:74417"/>
        <dbReference type="EC" id="2.8.4.3"/>
    </reaction>
</comment>
<comment type="cofactor">
    <cofactor evidence="1">
        <name>[4Fe-4S] cluster</name>
        <dbReference type="ChEBI" id="CHEBI:49883"/>
    </cofactor>
    <text evidence="1">Binds 2 [4Fe-4S] clusters. One cluster is coordinated with 3 cysteines and an exchangeable S-adenosyl-L-methionine.</text>
</comment>
<comment type="subunit">
    <text evidence="1">Monomer.</text>
</comment>
<comment type="subcellular location">
    <subcellularLocation>
        <location evidence="1">Cytoplasm</location>
    </subcellularLocation>
</comment>
<comment type="similarity">
    <text evidence="1">Belongs to the methylthiotransferase family. MiaB subfamily.</text>
</comment>
<comment type="sequence caution" evidence="3">
    <conflict type="erroneous initiation">
        <sequence resource="EMBL-CDS" id="CAR60123"/>
    </conflict>
</comment>
<organism>
    <name type="scientific">Salmonella paratyphi A (strain AKU_12601)</name>
    <dbReference type="NCBI Taxonomy" id="554290"/>
    <lineage>
        <taxon>Bacteria</taxon>
        <taxon>Pseudomonadati</taxon>
        <taxon>Pseudomonadota</taxon>
        <taxon>Gammaproteobacteria</taxon>
        <taxon>Enterobacterales</taxon>
        <taxon>Enterobacteriaceae</taxon>
        <taxon>Salmonella</taxon>
    </lineage>
</organism>
<evidence type="ECO:0000255" key="1">
    <source>
        <dbReference type="HAMAP-Rule" id="MF_01864"/>
    </source>
</evidence>
<evidence type="ECO:0000255" key="2">
    <source>
        <dbReference type="PROSITE-ProRule" id="PRU01266"/>
    </source>
</evidence>
<evidence type="ECO:0000305" key="3"/>
<reference key="1">
    <citation type="journal article" date="2009" name="BMC Genomics">
        <title>Pseudogene accumulation in the evolutionary histories of Salmonella enterica serovars Paratyphi A and Typhi.</title>
        <authorList>
            <person name="Holt K.E."/>
            <person name="Thomson N.R."/>
            <person name="Wain J."/>
            <person name="Langridge G.C."/>
            <person name="Hasan R."/>
            <person name="Bhutta Z.A."/>
            <person name="Quail M.A."/>
            <person name="Norbertczak H."/>
            <person name="Walker D."/>
            <person name="Simmonds M."/>
            <person name="White B."/>
            <person name="Bason N."/>
            <person name="Mungall K."/>
            <person name="Dougan G."/>
            <person name="Parkhill J."/>
        </authorList>
    </citation>
    <scope>NUCLEOTIDE SEQUENCE [LARGE SCALE GENOMIC DNA]</scope>
    <source>
        <strain>AKU_12601</strain>
    </source>
</reference>